<feature type="chain" id="PRO_0000234164" description="Urease subunit alpha">
    <location>
        <begin position="1"/>
        <end position="569"/>
    </location>
</feature>
<feature type="domain" description="Urease" evidence="1">
    <location>
        <begin position="131"/>
        <end position="569"/>
    </location>
</feature>
<feature type="active site" description="Proton donor" evidence="1">
    <location>
        <position position="322"/>
    </location>
</feature>
<feature type="binding site" evidence="1">
    <location>
        <position position="136"/>
    </location>
    <ligand>
        <name>Ni(2+)</name>
        <dbReference type="ChEBI" id="CHEBI:49786"/>
        <label>1</label>
    </ligand>
</feature>
<feature type="binding site" evidence="1">
    <location>
        <position position="138"/>
    </location>
    <ligand>
        <name>Ni(2+)</name>
        <dbReference type="ChEBI" id="CHEBI:49786"/>
        <label>1</label>
    </ligand>
</feature>
<feature type="binding site" description="via carbamate group" evidence="1">
    <location>
        <position position="219"/>
    </location>
    <ligand>
        <name>Ni(2+)</name>
        <dbReference type="ChEBI" id="CHEBI:49786"/>
        <label>1</label>
    </ligand>
</feature>
<feature type="binding site" description="via carbamate group" evidence="1">
    <location>
        <position position="219"/>
    </location>
    <ligand>
        <name>Ni(2+)</name>
        <dbReference type="ChEBI" id="CHEBI:49786"/>
        <label>2</label>
    </ligand>
</feature>
<feature type="binding site" evidence="1">
    <location>
        <position position="221"/>
    </location>
    <ligand>
        <name>substrate</name>
    </ligand>
</feature>
<feature type="binding site" evidence="1">
    <location>
        <position position="248"/>
    </location>
    <ligand>
        <name>Ni(2+)</name>
        <dbReference type="ChEBI" id="CHEBI:49786"/>
        <label>2</label>
    </ligand>
</feature>
<feature type="binding site" evidence="1">
    <location>
        <position position="274"/>
    </location>
    <ligand>
        <name>Ni(2+)</name>
        <dbReference type="ChEBI" id="CHEBI:49786"/>
        <label>2</label>
    </ligand>
</feature>
<feature type="binding site" evidence="1">
    <location>
        <position position="362"/>
    </location>
    <ligand>
        <name>Ni(2+)</name>
        <dbReference type="ChEBI" id="CHEBI:49786"/>
        <label>1</label>
    </ligand>
</feature>
<feature type="modified residue" description="N6-carboxylysine" evidence="1">
    <location>
        <position position="219"/>
    </location>
</feature>
<accession>Q7V1B6</accession>
<protein>
    <recommendedName>
        <fullName evidence="1">Urease subunit alpha</fullName>
        <ecNumber evidence="1">3.5.1.5</ecNumber>
    </recommendedName>
    <alternativeName>
        <fullName evidence="1">Urea amidohydrolase subunit alpha</fullName>
    </alternativeName>
</protein>
<evidence type="ECO:0000255" key="1">
    <source>
        <dbReference type="HAMAP-Rule" id="MF_01953"/>
    </source>
</evidence>
<sequence length="569" mass="61653">MSYKINRKTYAQTYGPTKGDRVRLADTELIIEVEKDFTTYGDEVKFGGGKVIRDGMGQSQVTREDGAVDTVITNALIVDWWGIVKADVGLKDGKIYEIGKAGNPDIQDNINIIIGSSTEVIAGEGHILTAGSIDTHIHFICPQQIETALASGVTTMLGGGTGPATGTNATTCTPGAFHISRMIQSAEAFPVNLGFFGKGNSSNETNLFEQVNAGACGLKLHEDWGTTPSTINSCLNVADTLDVQVCIHTDTLNEAGFVEDTIAAIAGRTIHTFHTEGAGGGHAPDIIKICGENNVLPSSTNPTRPYTKNTLEEHLDMLMVCHHLDSKIPEDIAFAESRIRRETIAAEDILHDIGAFSIIASDSQAMGRVGEVITRTFQTAHKMKVQRGPLPEDSDRNDNYRVKRYISKVTINPAIAHGINRFVGSIEKGKIADLVLWKPSFFGVKPELVVKGGSIVWSQMGDANASIPTPGPVHGRPMFANYGQSLLKSSFTFLSKNAIELDIPNKLSLQKNCLAVENTRSINKLDLKLNNKLPNITVDPQTYEVFADGVLLSCEPLEEVPMAQKYFLL</sequence>
<name>URE1_PROMP</name>
<comment type="catalytic activity">
    <reaction evidence="1">
        <text>urea + 2 H2O + H(+) = hydrogencarbonate + 2 NH4(+)</text>
        <dbReference type="Rhea" id="RHEA:20557"/>
        <dbReference type="ChEBI" id="CHEBI:15377"/>
        <dbReference type="ChEBI" id="CHEBI:15378"/>
        <dbReference type="ChEBI" id="CHEBI:16199"/>
        <dbReference type="ChEBI" id="CHEBI:17544"/>
        <dbReference type="ChEBI" id="CHEBI:28938"/>
        <dbReference type="EC" id="3.5.1.5"/>
    </reaction>
</comment>
<comment type="cofactor">
    <cofactor evidence="1">
        <name>Ni cation</name>
        <dbReference type="ChEBI" id="CHEBI:25516"/>
    </cofactor>
    <text evidence="1">Binds 2 nickel ions per subunit.</text>
</comment>
<comment type="pathway">
    <text evidence="1">Nitrogen metabolism; urea degradation; CO(2) and NH(3) from urea (urease route): step 1/1.</text>
</comment>
<comment type="subunit">
    <text evidence="1">Heterotrimer of UreA (gamma), UreB (beta) and UreC (alpha) subunits. Three heterotrimers associate to form the active enzyme.</text>
</comment>
<comment type="subcellular location">
    <subcellularLocation>
        <location evidence="1">Cytoplasm</location>
    </subcellularLocation>
</comment>
<comment type="PTM">
    <text evidence="1">Carboxylation allows a single lysine to coordinate two nickel ions.</text>
</comment>
<comment type="similarity">
    <text evidence="1">Belongs to the metallo-dependent hydrolases superfamily. Urease alpha subunit family.</text>
</comment>
<proteinExistence type="inferred from homology"/>
<reference key="1">
    <citation type="journal article" date="2003" name="Nature">
        <title>Genome divergence in two Prochlorococcus ecotypes reflects oceanic niche differentiation.</title>
        <authorList>
            <person name="Rocap G."/>
            <person name="Larimer F.W."/>
            <person name="Lamerdin J.E."/>
            <person name="Malfatti S."/>
            <person name="Chain P."/>
            <person name="Ahlgren N.A."/>
            <person name="Arellano A."/>
            <person name="Coleman M."/>
            <person name="Hauser L."/>
            <person name="Hess W.R."/>
            <person name="Johnson Z.I."/>
            <person name="Land M.L."/>
            <person name="Lindell D."/>
            <person name="Post A.F."/>
            <person name="Regala W."/>
            <person name="Shah M."/>
            <person name="Shaw S.L."/>
            <person name="Steglich C."/>
            <person name="Sullivan M.B."/>
            <person name="Ting C.S."/>
            <person name="Tolonen A."/>
            <person name="Webb E.A."/>
            <person name="Zinser E.R."/>
            <person name="Chisholm S.W."/>
        </authorList>
    </citation>
    <scope>NUCLEOTIDE SEQUENCE [LARGE SCALE GENOMIC DNA]</scope>
    <source>
        <strain>CCMP1986 / NIES-2087 / MED4</strain>
    </source>
</reference>
<keyword id="KW-0963">Cytoplasm</keyword>
<keyword id="KW-0378">Hydrolase</keyword>
<keyword id="KW-0479">Metal-binding</keyword>
<keyword id="KW-0533">Nickel</keyword>
<dbReference type="EC" id="3.5.1.5" evidence="1"/>
<dbReference type="EMBL" id="BX548174">
    <property type="protein sequence ID" value="CAE19422.1"/>
    <property type="molecule type" value="Genomic_DNA"/>
</dbReference>
<dbReference type="RefSeq" id="WP_011132596.1">
    <property type="nucleotide sequence ID" value="NC_005072.1"/>
</dbReference>
<dbReference type="SMR" id="Q7V1B6"/>
<dbReference type="STRING" id="59919.PMM0963"/>
<dbReference type="MEROPS" id="M38.982"/>
<dbReference type="KEGG" id="pmm:PMM0963"/>
<dbReference type="eggNOG" id="COG0804">
    <property type="taxonomic scope" value="Bacteria"/>
</dbReference>
<dbReference type="HOGENOM" id="CLU_000980_0_0_3"/>
<dbReference type="OrthoDB" id="9802793at2"/>
<dbReference type="UniPathway" id="UPA00258">
    <property type="reaction ID" value="UER00370"/>
</dbReference>
<dbReference type="Proteomes" id="UP000001026">
    <property type="component" value="Chromosome"/>
</dbReference>
<dbReference type="GO" id="GO:0005737">
    <property type="term" value="C:cytoplasm"/>
    <property type="evidence" value="ECO:0007669"/>
    <property type="project" value="UniProtKB-SubCell"/>
</dbReference>
<dbReference type="GO" id="GO:0016151">
    <property type="term" value="F:nickel cation binding"/>
    <property type="evidence" value="ECO:0007669"/>
    <property type="project" value="UniProtKB-UniRule"/>
</dbReference>
<dbReference type="GO" id="GO:0009039">
    <property type="term" value="F:urease activity"/>
    <property type="evidence" value="ECO:0007669"/>
    <property type="project" value="UniProtKB-UniRule"/>
</dbReference>
<dbReference type="GO" id="GO:0043419">
    <property type="term" value="P:urea catabolic process"/>
    <property type="evidence" value="ECO:0007669"/>
    <property type="project" value="UniProtKB-UniRule"/>
</dbReference>
<dbReference type="CDD" id="cd00375">
    <property type="entry name" value="Urease_alpha"/>
    <property type="match status" value="1"/>
</dbReference>
<dbReference type="Gene3D" id="3.20.20.140">
    <property type="entry name" value="Metal-dependent hydrolases"/>
    <property type="match status" value="1"/>
</dbReference>
<dbReference type="Gene3D" id="2.30.40.10">
    <property type="entry name" value="Urease, subunit C, domain 1"/>
    <property type="match status" value="1"/>
</dbReference>
<dbReference type="HAMAP" id="MF_01953">
    <property type="entry name" value="Urease_alpha"/>
    <property type="match status" value="1"/>
</dbReference>
<dbReference type="InterPro" id="IPR006680">
    <property type="entry name" value="Amidohydro-rel"/>
</dbReference>
<dbReference type="InterPro" id="IPR011059">
    <property type="entry name" value="Metal-dep_hydrolase_composite"/>
</dbReference>
<dbReference type="InterPro" id="IPR032466">
    <property type="entry name" value="Metal_Hydrolase"/>
</dbReference>
<dbReference type="InterPro" id="IPR011612">
    <property type="entry name" value="Urease_alpha_N_dom"/>
</dbReference>
<dbReference type="InterPro" id="IPR050112">
    <property type="entry name" value="Urease_alpha_subunit"/>
</dbReference>
<dbReference type="InterPro" id="IPR017950">
    <property type="entry name" value="Urease_AS"/>
</dbReference>
<dbReference type="InterPro" id="IPR005848">
    <property type="entry name" value="Urease_asu"/>
</dbReference>
<dbReference type="InterPro" id="IPR017951">
    <property type="entry name" value="Urease_asu_c"/>
</dbReference>
<dbReference type="NCBIfam" id="NF009685">
    <property type="entry name" value="PRK13206.1"/>
    <property type="match status" value="1"/>
</dbReference>
<dbReference type="NCBIfam" id="NF009686">
    <property type="entry name" value="PRK13207.1"/>
    <property type="match status" value="1"/>
</dbReference>
<dbReference type="NCBIfam" id="TIGR01792">
    <property type="entry name" value="urease_alph"/>
    <property type="match status" value="1"/>
</dbReference>
<dbReference type="PANTHER" id="PTHR43440">
    <property type="entry name" value="UREASE"/>
    <property type="match status" value="1"/>
</dbReference>
<dbReference type="PANTHER" id="PTHR43440:SF1">
    <property type="entry name" value="UREASE"/>
    <property type="match status" value="1"/>
</dbReference>
<dbReference type="Pfam" id="PF01979">
    <property type="entry name" value="Amidohydro_1"/>
    <property type="match status" value="1"/>
</dbReference>
<dbReference type="Pfam" id="PF00449">
    <property type="entry name" value="Urease_alpha"/>
    <property type="match status" value="1"/>
</dbReference>
<dbReference type="PRINTS" id="PR01752">
    <property type="entry name" value="UREASE"/>
</dbReference>
<dbReference type="SUPFAM" id="SSF51338">
    <property type="entry name" value="Composite domain of metallo-dependent hydrolases"/>
    <property type="match status" value="2"/>
</dbReference>
<dbReference type="SUPFAM" id="SSF51556">
    <property type="entry name" value="Metallo-dependent hydrolases"/>
    <property type="match status" value="1"/>
</dbReference>
<dbReference type="PROSITE" id="PS00145">
    <property type="entry name" value="UREASE_2"/>
    <property type="match status" value="1"/>
</dbReference>
<dbReference type="PROSITE" id="PS51368">
    <property type="entry name" value="UREASE_3"/>
    <property type="match status" value="1"/>
</dbReference>
<gene>
    <name evidence="1" type="primary">ureC</name>
    <name type="ordered locus">PMM0963</name>
</gene>
<organism>
    <name type="scientific">Prochlorococcus marinus subsp. pastoris (strain CCMP1986 / NIES-2087 / MED4)</name>
    <dbReference type="NCBI Taxonomy" id="59919"/>
    <lineage>
        <taxon>Bacteria</taxon>
        <taxon>Bacillati</taxon>
        <taxon>Cyanobacteriota</taxon>
        <taxon>Cyanophyceae</taxon>
        <taxon>Synechococcales</taxon>
        <taxon>Prochlorococcaceae</taxon>
        <taxon>Prochlorococcus</taxon>
    </lineage>
</organism>